<reference key="1">
    <citation type="submission" date="2005-03" db="EMBL/GenBank/DDBJ databases">
        <title>Brevibacillus brevis strain 47, complete genome.</title>
        <authorList>
            <person name="Hosoyama A."/>
            <person name="Yamada R."/>
            <person name="Hongo Y."/>
            <person name="Terui Y."/>
            <person name="Ankai A."/>
            <person name="Masuyama W."/>
            <person name="Sekiguchi M."/>
            <person name="Takeda T."/>
            <person name="Asano K."/>
            <person name="Ohji S."/>
            <person name="Ichikawa N."/>
            <person name="Narita S."/>
            <person name="Aoki N."/>
            <person name="Miura H."/>
            <person name="Matsushita S."/>
            <person name="Sekigawa T."/>
            <person name="Yamagata H."/>
            <person name="Yoshikawa H."/>
            <person name="Udaka S."/>
            <person name="Tanikawa S."/>
            <person name="Fujita N."/>
        </authorList>
    </citation>
    <scope>NUCLEOTIDE SEQUENCE [LARGE SCALE GENOMIC DNA]</scope>
    <source>
        <strain>47 / JCM 6285 / NBRC 100599</strain>
    </source>
</reference>
<keyword id="KW-0021">Allosteric enzyme</keyword>
<keyword id="KW-0328">Glycosyltransferase</keyword>
<keyword id="KW-0342">GTP-binding</keyword>
<keyword id="KW-0460">Magnesium</keyword>
<keyword id="KW-0547">Nucleotide-binding</keyword>
<keyword id="KW-1185">Reference proteome</keyword>
<keyword id="KW-0808">Transferase</keyword>
<organism>
    <name type="scientific">Brevibacillus brevis (strain 47 / JCM 6285 / NBRC 100599)</name>
    <dbReference type="NCBI Taxonomy" id="358681"/>
    <lineage>
        <taxon>Bacteria</taxon>
        <taxon>Bacillati</taxon>
        <taxon>Bacillota</taxon>
        <taxon>Bacilli</taxon>
        <taxon>Bacillales</taxon>
        <taxon>Paenibacillaceae</taxon>
        <taxon>Brevibacillus</taxon>
    </lineage>
</organism>
<gene>
    <name evidence="1" type="primary">upp</name>
    <name type="ordered locus">BBR47_54680</name>
</gene>
<dbReference type="EC" id="2.4.2.9" evidence="1"/>
<dbReference type="EMBL" id="AP008955">
    <property type="protein sequence ID" value="BAH46445.1"/>
    <property type="molecule type" value="Genomic_DNA"/>
</dbReference>
<dbReference type="RefSeq" id="WP_015893638.1">
    <property type="nucleotide sequence ID" value="NC_012491.1"/>
</dbReference>
<dbReference type="SMR" id="C0Z818"/>
<dbReference type="STRING" id="358681.BBR47_54680"/>
<dbReference type="KEGG" id="bbe:BBR47_54680"/>
<dbReference type="eggNOG" id="COG0035">
    <property type="taxonomic scope" value="Bacteria"/>
</dbReference>
<dbReference type="HOGENOM" id="CLU_067096_2_2_9"/>
<dbReference type="UniPathway" id="UPA00574">
    <property type="reaction ID" value="UER00636"/>
</dbReference>
<dbReference type="Proteomes" id="UP000001877">
    <property type="component" value="Chromosome"/>
</dbReference>
<dbReference type="GO" id="GO:0005525">
    <property type="term" value="F:GTP binding"/>
    <property type="evidence" value="ECO:0007669"/>
    <property type="project" value="UniProtKB-KW"/>
</dbReference>
<dbReference type="GO" id="GO:0000287">
    <property type="term" value="F:magnesium ion binding"/>
    <property type="evidence" value="ECO:0007669"/>
    <property type="project" value="UniProtKB-UniRule"/>
</dbReference>
<dbReference type="GO" id="GO:0004845">
    <property type="term" value="F:uracil phosphoribosyltransferase activity"/>
    <property type="evidence" value="ECO:0007669"/>
    <property type="project" value="UniProtKB-UniRule"/>
</dbReference>
<dbReference type="GO" id="GO:0044206">
    <property type="term" value="P:UMP salvage"/>
    <property type="evidence" value="ECO:0007669"/>
    <property type="project" value="UniProtKB-UniRule"/>
</dbReference>
<dbReference type="GO" id="GO:0006223">
    <property type="term" value="P:uracil salvage"/>
    <property type="evidence" value="ECO:0007669"/>
    <property type="project" value="InterPro"/>
</dbReference>
<dbReference type="CDD" id="cd06223">
    <property type="entry name" value="PRTases_typeI"/>
    <property type="match status" value="1"/>
</dbReference>
<dbReference type="FunFam" id="3.40.50.2020:FF:000003">
    <property type="entry name" value="Uracil phosphoribosyltransferase"/>
    <property type="match status" value="1"/>
</dbReference>
<dbReference type="Gene3D" id="3.40.50.2020">
    <property type="match status" value="1"/>
</dbReference>
<dbReference type="HAMAP" id="MF_01218_B">
    <property type="entry name" value="Upp_B"/>
    <property type="match status" value="1"/>
</dbReference>
<dbReference type="InterPro" id="IPR000836">
    <property type="entry name" value="PRibTrfase_dom"/>
</dbReference>
<dbReference type="InterPro" id="IPR029057">
    <property type="entry name" value="PRTase-like"/>
</dbReference>
<dbReference type="InterPro" id="IPR034332">
    <property type="entry name" value="Upp_B"/>
</dbReference>
<dbReference type="InterPro" id="IPR050054">
    <property type="entry name" value="UPRTase/APRTase"/>
</dbReference>
<dbReference type="InterPro" id="IPR005765">
    <property type="entry name" value="Ura_phspho_trans"/>
</dbReference>
<dbReference type="NCBIfam" id="NF001097">
    <property type="entry name" value="PRK00129.1"/>
    <property type="match status" value="1"/>
</dbReference>
<dbReference type="NCBIfam" id="TIGR01091">
    <property type="entry name" value="upp"/>
    <property type="match status" value="1"/>
</dbReference>
<dbReference type="PANTHER" id="PTHR32315">
    <property type="entry name" value="ADENINE PHOSPHORIBOSYLTRANSFERASE"/>
    <property type="match status" value="1"/>
</dbReference>
<dbReference type="PANTHER" id="PTHR32315:SF4">
    <property type="entry name" value="URACIL PHOSPHORIBOSYLTRANSFERASE, CHLOROPLASTIC"/>
    <property type="match status" value="1"/>
</dbReference>
<dbReference type="Pfam" id="PF14681">
    <property type="entry name" value="UPRTase"/>
    <property type="match status" value="1"/>
</dbReference>
<dbReference type="SUPFAM" id="SSF53271">
    <property type="entry name" value="PRTase-like"/>
    <property type="match status" value="1"/>
</dbReference>
<proteinExistence type="inferred from homology"/>
<feature type="chain" id="PRO_1000164813" description="Uracil phosphoribosyltransferase">
    <location>
        <begin position="1"/>
        <end position="209"/>
    </location>
</feature>
<feature type="binding site" evidence="1">
    <location>
        <position position="79"/>
    </location>
    <ligand>
        <name>5-phospho-alpha-D-ribose 1-diphosphate</name>
        <dbReference type="ChEBI" id="CHEBI:58017"/>
    </ligand>
</feature>
<feature type="binding site" evidence="1">
    <location>
        <position position="104"/>
    </location>
    <ligand>
        <name>5-phospho-alpha-D-ribose 1-diphosphate</name>
        <dbReference type="ChEBI" id="CHEBI:58017"/>
    </ligand>
</feature>
<feature type="binding site" evidence="1">
    <location>
        <begin position="131"/>
        <end position="139"/>
    </location>
    <ligand>
        <name>5-phospho-alpha-D-ribose 1-diphosphate</name>
        <dbReference type="ChEBI" id="CHEBI:58017"/>
    </ligand>
</feature>
<feature type="binding site" evidence="1">
    <location>
        <position position="194"/>
    </location>
    <ligand>
        <name>uracil</name>
        <dbReference type="ChEBI" id="CHEBI:17568"/>
    </ligand>
</feature>
<feature type="binding site" evidence="1">
    <location>
        <begin position="199"/>
        <end position="201"/>
    </location>
    <ligand>
        <name>uracil</name>
        <dbReference type="ChEBI" id="CHEBI:17568"/>
    </ligand>
</feature>
<feature type="binding site" evidence="1">
    <location>
        <position position="200"/>
    </location>
    <ligand>
        <name>5-phospho-alpha-D-ribose 1-diphosphate</name>
        <dbReference type="ChEBI" id="CHEBI:58017"/>
    </ligand>
</feature>
<comment type="function">
    <text evidence="1">Catalyzes the conversion of uracil and 5-phospho-alpha-D-ribose 1-diphosphate (PRPP) to UMP and diphosphate.</text>
</comment>
<comment type="catalytic activity">
    <reaction evidence="1">
        <text>UMP + diphosphate = 5-phospho-alpha-D-ribose 1-diphosphate + uracil</text>
        <dbReference type="Rhea" id="RHEA:13017"/>
        <dbReference type="ChEBI" id="CHEBI:17568"/>
        <dbReference type="ChEBI" id="CHEBI:33019"/>
        <dbReference type="ChEBI" id="CHEBI:57865"/>
        <dbReference type="ChEBI" id="CHEBI:58017"/>
        <dbReference type="EC" id="2.4.2.9"/>
    </reaction>
</comment>
<comment type="cofactor">
    <cofactor evidence="1">
        <name>Mg(2+)</name>
        <dbReference type="ChEBI" id="CHEBI:18420"/>
    </cofactor>
    <text evidence="1">Binds 1 Mg(2+) ion per subunit. The magnesium is bound as Mg-PRPP.</text>
</comment>
<comment type="activity regulation">
    <text evidence="1">Allosterically activated by GTP.</text>
</comment>
<comment type="pathway">
    <text evidence="1">Pyrimidine metabolism; UMP biosynthesis via salvage pathway; UMP from uracil: step 1/1.</text>
</comment>
<comment type="similarity">
    <text evidence="1">Belongs to the UPRTase family.</text>
</comment>
<evidence type="ECO:0000255" key="1">
    <source>
        <dbReference type="HAMAP-Rule" id="MF_01218"/>
    </source>
</evidence>
<name>UPP_BREBN</name>
<accession>C0Z818</accession>
<protein>
    <recommendedName>
        <fullName evidence="1">Uracil phosphoribosyltransferase</fullName>
        <ecNumber evidence="1">2.4.2.9</ecNumber>
    </recommendedName>
    <alternativeName>
        <fullName evidence="1">UMP pyrophosphorylase</fullName>
    </alternativeName>
    <alternativeName>
        <fullName evidence="1">UPRTase</fullName>
    </alternativeName>
</protein>
<sequence>MSRVYVFDHPLIQHKVTYIRDKNTGTKEFRELVDEVTTLMGYEITRDMPLEEITIETPVATCQSNVIAGKKVGLVPILRAGLGMVDGLMRLIPAAKVGHVGLYRDPETLQPIEYYVKLPSDVAERELIVTDPMLATGGSAVAALTALKKRGAKNLKLMCLIAAPEGIKLVQDEHPDVDIYVAAVDEYLNDHGYIVPGLGDAGDRLYGTK</sequence>